<evidence type="ECO:0000255" key="1">
    <source>
        <dbReference type="HAMAP-Rule" id="MF_01435"/>
    </source>
</evidence>
<evidence type="ECO:0000255" key="2">
    <source>
        <dbReference type="PROSITE-ProRule" id="PRU01323"/>
    </source>
</evidence>
<keyword id="KW-1015">Disulfide bond</keyword>
<keyword id="KW-0964">Secreted</keyword>
<keyword id="KW-0732">Signal</keyword>
<name>YEBF_SALPC</name>
<reference key="1">
    <citation type="journal article" date="2009" name="PLoS ONE">
        <title>Salmonella paratyphi C: genetic divergence from Salmonella choleraesuis and pathogenic convergence with Salmonella typhi.</title>
        <authorList>
            <person name="Liu W.-Q."/>
            <person name="Feng Y."/>
            <person name="Wang Y."/>
            <person name="Zou Q.-H."/>
            <person name="Chen F."/>
            <person name="Guo J.-T."/>
            <person name="Peng Y.-H."/>
            <person name="Jin Y."/>
            <person name="Li Y.-G."/>
            <person name="Hu S.-N."/>
            <person name="Johnston R.N."/>
            <person name="Liu G.-R."/>
            <person name="Liu S.-L."/>
        </authorList>
    </citation>
    <scope>NUCLEOTIDE SEQUENCE [LARGE SCALE GENOMIC DNA]</scope>
    <source>
        <strain>RKS4594</strain>
    </source>
</reference>
<comment type="subcellular location">
    <subcellularLocation>
        <location evidence="1">Secreted</location>
    </subcellularLocation>
</comment>
<comment type="similarity">
    <text evidence="1">Belongs to the YebF family.</text>
</comment>
<protein>
    <recommendedName>
        <fullName evidence="1">Protein YebF</fullName>
    </recommendedName>
</protein>
<organism>
    <name type="scientific">Salmonella paratyphi C (strain RKS4594)</name>
    <dbReference type="NCBI Taxonomy" id="476213"/>
    <lineage>
        <taxon>Bacteria</taxon>
        <taxon>Pseudomonadati</taxon>
        <taxon>Pseudomonadota</taxon>
        <taxon>Gammaproteobacteria</taxon>
        <taxon>Enterobacterales</taxon>
        <taxon>Enterobacteriaceae</taxon>
        <taxon>Salmonella</taxon>
    </lineage>
</organism>
<proteinExistence type="inferred from homology"/>
<accession>C0Q2H0</accession>
<feature type="signal peptide" evidence="1">
    <location>
        <begin position="1"/>
        <end position="21"/>
    </location>
</feature>
<feature type="chain" id="PRO_1000184903" description="Protein YebF">
    <location>
        <begin position="22"/>
        <end position="117"/>
    </location>
</feature>
<feature type="domain" description="YebF/Cmi" evidence="2">
    <location>
        <begin position="30"/>
        <end position="117"/>
    </location>
</feature>
<feature type="disulfide bond" evidence="2">
    <location>
        <begin position="34"/>
        <end position="107"/>
    </location>
</feature>
<dbReference type="EMBL" id="CP000857">
    <property type="protein sequence ID" value="ACN45973.1"/>
    <property type="molecule type" value="Genomic_DNA"/>
</dbReference>
<dbReference type="RefSeq" id="WP_001042123.1">
    <property type="nucleotide sequence ID" value="NC_012125.1"/>
</dbReference>
<dbReference type="SMR" id="C0Q2H0"/>
<dbReference type="KEGG" id="sei:SPC_1835"/>
<dbReference type="HOGENOM" id="CLU_161319_1_0_6"/>
<dbReference type="Proteomes" id="UP000001599">
    <property type="component" value="Chromosome"/>
</dbReference>
<dbReference type="GO" id="GO:0005576">
    <property type="term" value="C:extracellular region"/>
    <property type="evidence" value="ECO:0007669"/>
    <property type="project" value="UniProtKB-SubCell"/>
</dbReference>
<dbReference type="Gene3D" id="3.10.450.300">
    <property type="entry name" value="YebF/Colicin-M immunity protein"/>
    <property type="match status" value="1"/>
</dbReference>
<dbReference type="HAMAP" id="MF_01435">
    <property type="entry name" value="YebF"/>
    <property type="match status" value="1"/>
</dbReference>
<dbReference type="InterPro" id="IPR020236">
    <property type="entry name" value="Uncharacterised_YebF"/>
</dbReference>
<dbReference type="InterPro" id="IPR038703">
    <property type="entry name" value="YebF/Cmi_sf"/>
</dbReference>
<dbReference type="InterPro" id="IPR025603">
    <property type="entry name" value="YebF/ColM_immunity"/>
</dbReference>
<dbReference type="NCBIfam" id="NF010224">
    <property type="entry name" value="PRK13680.1"/>
    <property type="match status" value="1"/>
</dbReference>
<dbReference type="NCBIfam" id="NF041240">
    <property type="entry name" value="YebF_not_Cmi"/>
    <property type="match status" value="1"/>
</dbReference>
<dbReference type="Pfam" id="PF13995">
    <property type="entry name" value="YebF"/>
    <property type="match status" value="1"/>
</dbReference>
<dbReference type="PROSITE" id="PS51979">
    <property type="entry name" value="YEBF_CMI"/>
    <property type="match status" value="1"/>
</dbReference>
<gene>
    <name evidence="1" type="primary">yebF</name>
    <name type="ordered locus">SPC_1835</name>
</gene>
<sequence length="117" mass="12774">MNKRGALLSLLLLSASVSAFAASTESKSVKFPQCEGLDAAGIAASVKRDYQQNRIVRWADDQKKVGQADPVAWVNVQDVVGQNDKWTVPLTVRGKSADIHYQVIVDCKAGKAEYKPR</sequence>